<organism>
    <name type="scientific">Geobacter sulfurreducens (strain ATCC 51573 / DSM 12127 / PCA)</name>
    <dbReference type="NCBI Taxonomy" id="243231"/>
    <lineage>
        <taxon>Bacteria</taxon>
        <taxon>Pseudomonadati</taxon>
        <taxon>Thermodesulfobacteriota</taxon>
        <taxon>Desulfuromonadia</taxon>
        <taxon>Geobacterales</taxon>
        <taxon>Geobacteraceae</taxon>
        <taxon>Geobacter</taxon>
    </lineage>
</organism>
<protein>
    <recommendedName>
        <fullName evidence="1">Large ribosomal subunit protein bL21</fullName>
    </recommendedName>
    <alternativeName>
        <fullName evidence="2">50S ribosomal protein L21</fullName>
    </alternativeName>
</protein>
<proteinExistence type="inferred from homology"/>
<gene>
    <name evidence="1" type="primary">rplU</name>
    <name type="ordered locus">GSU3236</name>
</gene>
<keyword id="KW-1185">Reference proteome</keyword>
<keyword id="KW-0687">Ribonucleoprotein</keyword>
<keyword id="KW-0689">Ribosomal protein</keyword>
<keyword id="KW-0694">RNA-binding</keyword>
<keyword id="KW-0699">rRNA-binding</keyword>
<dbReference type="EMBL" id="AE017180">
    <property type="protein sequence ID" value="AAR36627.1"/>
    <property type="molecule type" value="Genomic_DNA"/>
</dbReference>
<dbReference type="RefSeq" id="NP_954277.1">
    <property type="nucleotide sequence ID" value="NC_002939.5"/>
</dbReference>
<dbReference type="RefSeq" id="WP_010943851.1">
    <property type="nucleotide sequence ID" value="NC_002939.5"/>
</dbReference>
<dbReference type="SMR" id="Q747M9"/>
<dbReference type="FunCoup" id="Q747M9">
    <property type="interactions" value="637"/>
</dbReference>
<dbReference type="STRING" id="243231.GSU3236"/>
<dbReference type="EnsemblBacteria" id="AAR36627">
    <property type="protein sequence ID" value="AAR36627"/>
    <property type="gene ID" value="GSU3236"/>
</dbReference>
<dbReference type="KEGG" id="gsu:GSU3236"/>
<dbReference type="PATRIC" id="fig|243231.5.peg.3256"/>
<dbReference type="eggNOG" id="COG0261">
    <property type="taxonomic scope" value="Bacteria"/>
</dbReference>
<dbReference type="HOGENOM" id="CLU_061463_3_2_7"/>
<dbReference type="InParanoid" id="Q747M9"/>
<dbReference type="OrthoDB" id="9813334at2"/>
<dbReference type="Proteomes" id="UP000000577">
    <property type="component" value="Chromosome"/>
</dbReference>
<dbReference type="GO" id="GO:0005737">
    <property type="term" value="C:cytoplasm"/>
    <property type="evidence" value="ECO:0007669"/>
    <property type="project" value="UniProtKB-ARBA"/>
</dbReference>
<dbReference type="GO" id="GO:1990904">
    <property type="term" value="C:ribonucleoprotein complex"/>
    <property type="evidence" value="ECO:0007669"/>
    <property type="project" value="UniProtKB-KW"/>
</dbReference>
<dbReference type="GO" id="GO:0005840">
    <property type="term" value="C:ribosome"/>
    <property type="evidence" value="ECO:0007669"/>
    <property type="project" value="UniProtKB-KW"/>
</dbReference>
<dbReference type="GO" id="GO:0019843">
    <property type="term" value="F:rRNA binding"/>
    <property type="evidence" value="ECO:0007669"/>
    <property type="project" value="UniProtKB-UniRule"/>
</dbReference>
<dbReference type="GO" id="GO:0003735">
    <property type="term" value="F:structural constituent of ribosome"/>
    <property type="evidence" value="ECO:0000318"/>
    <property type="project" value="GO_Central"/>
</dbReference>
<dbReference type="GO" id="GO:0006412">
    <property type="term" value="P:translation"/>
    <property type="evidence" value="ECO:0007669"/>
    <property type="project" value="UniProtKB-UniRule"/>
</dbReference>
<dbReference type="HAMAP" id="MF_01363">
    <property type="entry name" value="Ribosomal_bL21"/>
    <property type="match status" value="1"/>
</dbReference>
<dbReference type="InterPro" id="IPR028909">
    <property type="entry name" value="bL21-like"/>
</dbReference>
<dbReference type="InterPro" id="IPR036164">
    <property type="entry name" value="bL21-like_sf"/>
</dbReference>
<dbReference type="InterPro" id="IPR001787">
    <property type="entry name" value="Ribosomal_bL21"/>
</dbReference>
<dbReference type="InterPro" id="IPR018258">
    <property type="entry name" value="Ribosomal_bL21_CS"/>
</dbReference>
<dbReference type="NCBIfam" id="TIGR00061">
    <property type="entry name" value="L21"/>
    <property type="match status" value="1"/>
</dbReference>
<dbReference type="PANTHER" id="PTHR21349">
    <property type="entry name" value="50S RIBOSOMAL PROTEIN L21"/>
    <property type="match status" value="1"/>
</dbReference>
<dbReference type="PANTHER" id="PTHR21349:SF0">
    <property type="entry name" value="LARGE RIBOSOMAL SUBUNIT PROTEIN BL21M"/>
    <property type="match status" value="1"/>
</dbReference>
<dbReference type="Pfam" id="PF00829">
    <property type="entry name" value="Ribosomal_L21p"/>
    <property type="match status" value="1"/>
</dbReference>
<dbReference type="SUPFAM" id="SSF141091">
    <property type="entry name" value="L21p-like"/>
    <property type="match status" value="1"/>
</dbReference>
<dbReference type="PROSITE" id="PS01169">
    <property type="entry name" value="RIBOSOMAL_L21"/>
    <property type="match status" value="1"/>
</dbReference>
<name>RL21_GEOSL</name>
<reference key="1">
    <citation type="journal article" date="2003" name="Science">
        <title>Genome of Geobacter sulfurreducens: metal reduction in subsurface environments.</title>
        <authorList>
            <person name="Methe B.A."/>
            <person name="Nelson K.E."/>
            <person name="Eisen J.A."/>
            <person name="Paulsen I.T."/>
            <person name="Nelson W.C."/>
            <person name="Heidelberg J.F."/>
            <person name="Wu D."/>
            <person name="Wu M."/>
            <person name="Ward N.L."/>
            <person name="Beanan M.J."/>
            <person name="Dodson R.J."/>
            <person name="Madupu R."/>
            <person name="Brinkac L.M."/>
            <person name="Daugherty S.C."/>
            <person name="DeBoy R.T."/>
            <person name="Durkin A.S."/>
            <person name="Gwinn M.L."/>
            <person name="Kolonay J.F."/>
            <person name="Sullivan S.A."/>
            <person name="Haft D.H."/>
            <person name="Selengut J."/>
            <person name="Davidsen T.M."/>
            <person name="Zafar N."/>
            <person name="White O."/>
            <person name="Tran B."/>
            <person name="Romero C."/>
            <person name="Forberger H.A."/>
            <person name="Weidman J.F."/>
            <person name="Khouri H.M."/>
            <person name="Feldblyum T.V."/>
            <person name="Utterback T.R."/>
            <person name="Van Aken S.E."/>
            <person name="Lovley D.R."/>
            <person name="Fraser C.M."/>
        </authorList>
    </citation>
    <scope>NUCLEOTIDE SEQUENCE [LARGE SCALE GENOMIC DNA]</scope>
    <source>
        <strain>ATCC 51573 / DSM 12127 / PCA</strain>
    </source>
</reference>
<sequence length="102" mass="11317">MYAVIRTGGKQYKVSEGDFLKVEKLEGAVGDTVELKDVLMVGGETVAIGTPLVPSASVVGRIVDQGKDKKILVFKSKRRKNFRKMYGHRQPRTVLKIEKINA</sequence>
<evidence type="ECO:0000255" key="1">
    <source>
        <dbReference type="HAMAP-Rule" id="MF_01363"/>
    </source>
</evidence>
<evidence type="ECO:0000305" key="2"/>
<accession>Q747M9</accession>
<comment type="function">
    <text evidence="1">This protein binds to 23S rRNA in the presence of protein L20.</text>
</comment>
<comment type="subunit">
    <text evidence="1">Part of the 50S ribosomal subunit. Contacts protein L20.</text>
</comment>
<comment type="similarity">
    <text evidence="1">Belongs to the bacterial ribosomal protein bL21 family.</text>
</comment>
<feature type="chain" id="PRO_0000269322" description="Large ribosomal subunit protein bL21">
    <location>
        <begin position="1"/>
        <end position="102"/>
    </location>
</feature>